<protein>
    <recommendedName>
        <fullName evidence="1">sn-glycerol-3-phosphate import ATP-binding protein UgpC</fullName>
        <ecNumber evidence="1">7.6.2.10</ecNumber>
    </recommendedName>
</protein>
<proteinExistence type="inferred from homology"/>
<accession>Q8Z245</accession>
<accession>Q7C5X8</accession>
<reference key="1">
    <citation type="journal article" date="2001" name="Nature">
        <title>Complete genome sequence of a multiple drug resistant Salmonella enterica serovar Typhi CT18.</title>
        <authorList>
            <person name="Parkhill J."/>
            <person name="Dougan G."/>
            <person name="James K.D."/>
            <person name="Thomson N.R."/>
            <person name="Pickard D."/>
            <person name="Wain J."/>
            <person name="Churcher C.M."/>
            <person name="Mungall K.L."/>
            <person name="Bentley S.D."/>
            <person name="Holden M.T.G."/>
            <person name="Sebaihia M."/>
            <person name="Baker S."/>
            <person name="Basham D."/>
            <person name="Brooks K."/>
            <person name="Chillingworth T."/>
            <person name="Connerton P."/>
            <person name="Cronin A."/>
            <person name="Davis P."/>
            <person name="Davies R.M."/>
            <person name="Dowd L."/>
            <person name="White N."/>
            <person name="Farrar J."/>
            <person name="Feltwell T."/>
            <person name="Hamlin N."/>
            <person name="Haque A."/>
            <person name="Hien T.T."/>
            <person name="Holroyd S."/>
            <person name="Jagels K."/>
            <person name="Krogh A."/>
            <person name="Larsen T.S."/>
            <person name="Leather S."/>
            <person name="Moule S."/>
            <person name="O'Gaora P."/>
            <person name="Parry C."/>
            <person name="Quail M.A."/>
            <person name="Rutherford K.M."/>
            <person name="Simmonds M."/>
            <person name="Skelton J."/>
            <person name="Stevens K."/>
            <person name="Whitehead S."/>
            <person name="Barrell B.G."/>
        </authorList>
    </citation>
    <scope>NUCLEOTIDE SEQUENCE [LARGE SCALE GENOMIC DNA]</scope>
    <source>
        <strain>CT18</strain>
    </source>
</reference>
<reference key="2">
    <citation type="journal article" date="2003" name="J. Bacteriol.">
        <title>Comparative genomics of Salmonella enterica serovar Typhi strains Ty2 and CT18.</title>
        <authorList>
            <person name="Deng W."/>
            <person name="Liou S.-R."/>
            <person name="Plunkett G. III"/>
            <person name="Mayhew G.F."/>
            <person name="Rose D.J."/>
            <person name="Burland V."/>
            <person name="Kodoyianni V."/>
            <person name="Schwartz D.C."/>
            <person name="Blattner F.R."/>
        </authorList>
    </citation>
    <scope>NUCLEOTIDE SEQUENCE [LARGE SCALE GENOMIC DNA]</scope>
    <source>
        <strain>ATCC 700931 / Ty2</strain>
    </source>
</reference>
<comment type="function">
    <text evidence="1">Part of the ABC transporter complex UgpBAEC involved in sn-glycerol-3-phosphate (G3P) import. Responsible for energy coupling to the transport system.</text>
</comment>
<comment type="catalytic activity">
    <reaction evidence="1">
        <text>sn-glycerol 3-phosphate(out) + ATP + H2O = sn-glycerol 3-phosphate(in) + ADP + phosphate + H(+)</text>
        <dbReference type="Rhea" id="RHEA:21668"/>
        <dbReference type="ChEBI" id="CHEBI:15377"/>
        <dbReference type="ChEBI" id="CHEBI:15378"/>
        <dbReference type="ChEBI" id="CHEBI:30616"/>
        <dbReference type="ChEBI" id="CHEBI:43474"/>
        <dbReference type="ChEBI" id="CHEBI:57597"/>
        <dbReference type="ChEBI" id="CHEBI:456216"/>
        <dbReference type="EC" id="7.6.2.10"/>
    </reaction>
</comment>
<comment type="subunit">
    <text evidence="1">The complex is composed of two ATP-binding proteins (UgpC), two transmembrane proteins (UgpA and UgpE) and a solute-binding protein (UgpB).</text>
</comment>
<comment type="subcellular location">
    <subcellularLocation>
        <location evidence="1">Cell inner membrane</location>
        <topology evidence="1">Peripheral membrane protein</topology>
    </subcellularLocation>
</comment>
<comment type="similarity">
    <text evidence="1">Belongs to the ABC transporter superfamily. sn-glycerol-3-phosphate importer (TC 3.A.1.1.3) family.</text>
</comment>
<sequence>MAGLKLQAVTKSWGGKTQVIQPLTLDVADGEFIVMVGPSGCGKSTLLRMVAGLERVTSGDIWIDRKRVTEMEPKDRGIAMVFQNYALYPHMSVEENMAWGLKIRGMSKAHIEERVREAARILELDGLLKRRPRELSGGQRQRVAMGRAIVREPAVFLFDEPLSNLDAKLRVQMRLELQHLHRRLRTTSLYVTHDQVEAMTLAQRVMVMNKGVAEQIGTPVEVYEKPASRFVASFIGSPAMNLLDGVISASGDRFELPGGLALPIGAGYRGHAGRKMTLGIRPEHIALSSQAEGGVPLTVDTLEILGADNLAHGRWGDQKLVVRLAHQQRPAAGSTLWLRLPEHQRHLFDGETGQRV</sequence>
<keyword id="KW-0067">ATP-binding</keyword>
<keyword id="KW-0997">Cell inner membrane</keyword>
<keyword id="KW-1003">Cell membrane</keyword>
<keyword id="KW-0472">Membrane</keyword>
<keyword id="KW-0547">Nucleotide-binding</keyword>
<keyword id="KW-0762">Sugar transport</keyword>
<keyword id="KW-1278">Translocase</keyword>
<keyword id="KW-0813">Transport</keyword>
<organism>
    <name type="scientific">Salmonella typhi</name>
    <dbReference type="NCBI Taxonomy" id="90370"/>
    <lineage>
        <taxon>Bacteria</taxon>
        <taxon>Pseudomonadati</taxon>
        <taxon>Pseudomonadota</taxon>
        <taxon>Gammaproteobacteria</taxon>
        <taxon>Enterobacterales</taxon>
        <taxon>Enterobacteriaceae</taxon>
        <taxon>Salmonella</taxon>
    </lineage>
</organism>
<gene>
    <name evidence="1" type="primary">ugpC</name>
    <name type="ordered locus">STY4257</name>
    <name type="ordered locus">t3967</name>
</gene>
<dbReference type="EC" id="7.6.2.10" evidence="1"/>
<dbReference type="EMBL" id="AL513382">
    <property type="protein sequence ID" value="CAD08075.1"/>
    <property type="molecule type" value="Genomic_DNA"/>
</dbReference>
<dbReference type="EMBL" id="AE014613">
    <property type="protein sequence ID" value="AAO71437.1"/>
    <property type="molecule type" value="Genomic_DNA"/>
</dbReference>
<dbReference type="RefSeq" id="NP_458365.1">
    <property type="nucleotide sequence ID" value="NC_003198.1"/>
</dbReference>
<dbReference type="RefSeq" id="WP_000907851.1">
    <property type="nucleotide sequence ID" value="NZ_WSUR01000001.1"/>
</dbReference>
<dbReference type="SMR" id="Q8Z245"/>
<dbReference type="STRING" id="220341.gene:17588088"/>
<dbReference type="KEGG" id="stt:t3967"/>
<dbReference type="KEGG" id="sty:STY4257"/>
<dbReference type="PATRIC" id="fig|220341.7.peg.4348"/>
<dbReference type="eggNOG" id="COG3842">
    <property type="taxonomic scope" value="Bacteria"/>
</dbReference>
<dbReference type="HOGENOM" id="CLU_000604_1_1_6"/>
<dbReference type="OMA" id="DSPRNMY"/>
<dbReference type="OrthoDB" id="9802264at2"/>
<dbReference type="Proteomes" id="UP000000541">
    <property type="component" value="Chromosome"/>
</dbReference>
<dbReference type="Proteomes" id="UP000002670">
    <property type="component" value="Chromosome"/>
</dbReference>
<dbReference type="GO" id="GO:0055052">
    <property type="term" value="C:ATP-binding cassette (ABC) transporter complex, substrate-binding subunit-containing"/>
    <property type="evidence" value="ECO:0007669"/>
    <property type="project" value="TreeGrafter"/>
</dbReference>
<dbReference type="GO" id="GO:0015430">
    <property type="term" value="F:ABC-type glycerol-3-phosphate transporter activity"/>
    <property type="evidence" value="ECO:0007669"/>
    <property type="project" value="UniProtKB-EC"/>
</dbReference>
<dbReference type="GO" id="GO:0005524">
    <property type="term" value="F:ATP binding"/>
    <property type="evidence" value="ECO:0007669"/>
    <property type="project" value="UniProtKB-KW"/>
</dbReference>
<dbReference type="GO" id="GO:0016887">
    <property type="term" value="F:ATP hydrolysis activity"/>
    <property type="evidence" value="ECO:0007669"/>
    <property type="project" value="InterPro"/>
</dbReference>
<dbReference type="GO" id="GO:0008643">
    <property type="term" value="P:carbohydrate transport"/>
    <property type="evidence" value="ECO:0007669"/>
    <property type="project" value="InterPro"/>
</dbReference>
<dbReference type="GO" id="GO:0001407">
    <property type="term" value="P:glycerophosphodiester transmembrane transport"/>
    <property type="evidence" value="ECO:0007669"/>
    <property type="project" value="TreeGrafter"/>
</dbReference>
<dbReference type="CDD" id="cd03301">
    <property type="entry name" value="ABC_MalK_N"/>
    <property type="match status" value="1"/>
</dbReference>
<dbReference type="FunFam" id="3.40.50.300:FF:000042">
    <property type="entry name" value="Maltose/maltodextrin ABC transporter, ATP-binding protein"/>
    <property type="match status" value="1"/>
</dbReference>
<dbReference type="FunFam" id="2.40.50.100:FF:000032">
    <property type="entry name" value="sn-glycerol-3-phosphate import ATP-binding protein UgpC"/>
    <property type="match status" value="1"/>
</dbReference>
<dbReference type="FunFam" id="2.40.50.140:FF:000142">
    <property type="entry name" value="sn-glycerol-3-phosphate import ATP-binding protein UgpC"/>
    <property type="match status" value="1"/>
</dbReference>
<dbReference type="Gene3D" id="2.40.50.100">
    <property type="match status" value="1"/>
</dbReference>
<dbReference type="Gene3D" id="2.40.50.140">
    <property type="entry name" value="Nucleic acid-binding proteins"/>
    <property type="match status" value="1"/>
</dbReference>
<dbReference type="Gene3D" id="3.40.50.300">
    <property type="entry name" value="P-loop containing nucleotide triphosphate hydrolases"/>
    <property type="match status" value="1"/>
</dbReference>
<dbReference type="InterPro" id="IPR003593">
    <property type="entry name" value="AAA+_ATPase"/>
</dbReference>
<dbReference type="InterPro" id="IPR003439">
    <property type="entry name" value="ABC_transporter-like_ATP-bd"/>
</dbReference>
<dbReference type="InterPro" id="IPR017871">
    <property type="entry name" value="ABC_transporter-like_CS"/>
</dbReference>
<dbReference type="InterPro" id="IPR015855">
    <property type="entry name" value="ABC_transpr_MalK-like"/>
</dbReference>
<dbReference type="InterPro" id="IPR047641">
    <property type="entry name" value="ABC_transpr_MalK/UgpC-like"/>
</dbReference>
<dbReference type="InterPro" id="IPR008995">
    <property type="entry name" value="Mo/tungstate-bd_C_term_dom"/>
</dbReference>
<dbReference type="InterPro" id="IPR012340">
    <property type="entry name" value="NA-bd_OB-fold"/>
</dbReference>
<dbReference type="InterPro" id="IPR040582">
    <property type="entry name" value="OB_MalK-like"/>
</dbReference>
<dbReference type="InterPro" id="IPR027417">
    <property type="entry name" value="P-loop_NTPase"/>
</dbReference>
<dbReference type="NCBIfam" id="NF008653">
    <property type="entry name" value="PRK11650.1"/>
    <property type="match status" value="1"/>
</dbReference>
<dbReference type="PANTHER" id="PTHR43875">
    <property type="entry name" value="MALTODEXTRIN IMPORT ATP-BINDING PROTEIN MSMX"/>
    <property type="match status" value="1"/>
</dbReference>
<dbReference type="PANTHER" id="PTHR43875:SF12">
    <property type="entry name" value="SN-GLYCEROL-3-PHOSPHATE IMPORT ATP-BINDING PROTEIN UGPC"/>
    <property type="match status" value="1"/>
</dbReference>
<dbReference type="Pfam" id="PF00005">
    <property type="entry name" value="ABC_tran"/>
    <property type="match status" value="1"/>
</dbReference>
<dbReference type="Pfam" id="PF17912">
    <property type="entry name" value="OB_MalK"/>
    <property type="match status" value="1"/>
</dbReference>
<dbReference type="SMART" id="SM00382">
    <property type="entry name" value="AAA"/>
    <property type="match status" value="1"/>
</dbReference>
<dbReference type="SUPFAM" id="SSF50331">
    <property type="entry name" value="MOP-like"/>
    <property type="match status" value="1"/>
</dbReference>
<dbReference type="SUPFAM" id="SSF52540">
    <property type="entry name" value="P-loop containing nucleoside triphosphate hydrolases"/>
    <property type="match status" value="1"/>
</dbReference>
<dbReference type="PROSITE" id="PS00211">
    <property type="entry name" value="ABC_TRANSPORTER_1"/>
    <property type="match status" value="1"/>
</dbReference>
<dbReference type="PROSITE" id="PS50893">
    <property type="entry name" value="ABC_TRANSPORTER_2"/>
    <property type="match status" value="1"/>
</dbReference>
<dbReference type="PROSITE" id="PS51315">
    <property type="entry name" value="UGPC"/>
    <property type="match status" value="1"/>
</dbReference>
<feature type="chain" id="PRO_0000289780" description="sn-glycerol-3-phosphate import ATP-binding protein UgpC">
    <location>
        <begin position="1"/>
        <end position="356"/>
    </location>
</feature>
<feature type="domain" description="ABC transporter" evidence="1">
    <location>
        <begin position="4"/>
        <end position="235"/>
    </location>
</feature>
<feature type="binding site" evidence="1">
    <location>
        <begin position="37"/>
        <end position="44"/>
    </location>
    <ligand>
        <name>ATP</name>
        <dbReference type="ChEBI" id="CHEBI:30616"/>
    </ligand>
</feature>
<name>UGPC_SALTI</name>
<evidence type="ECO:0000255" key="1">
    <source>
        <dbReference type="HAMAP-Rule" id="MF_01727"/>
    </source>
</evidence>